<keyword id="KW-0378">Hydrolase</keyword>
<keyword id="KW-0479">Metal-binding</keyword>
<keyword id="KW-0540">Nuclease</keyword>
<keyword id="KW-0539">Nucleus</keyword>
<keyword id="KW-1185">Reference proteome</keyword>
<accession>Q8SW70</accession>
<organism>
    <name type="scientific">Encephalitozoon cuniculi (strain GB-M1)</name>
    <name type="common">Microsporidian parasite</name>
    <dbReference type="NCBI Taxonomy" id="284813"/>
    <lineage>
        <taxon>Eukaryota</taxon>
        <taxon>Fungi</taxon>
        <taxon>Fungi incertae sedis</taxon>
        <taxon>Microsporidia</taxon>
        <taxon>Unikaryonidae</taxon>
        <taxon>Encephalitozoon</taxon>
    </lineage>
</organism>
<comment type="function">
    <text evidence="1">Putative deoxyribonuclease.</text>
</comment>
<comment type="cofactor">
    <cofactor evidence="1">
        <name>a divalent metal cation</name>
        <dbReference type="ChEBI" id="CHEBI:60240"/>
    </cofactor>
    <text evidence="1">Binds 2 divalent metal cations per subunit.</text>
</comment>
<comment type="subcellular location">
    <subcellularLocation>
        <location evidence="2">Nucleus</location>
    </subcellularLocation>
</comment>
<comment type="similarity">
    <text evidence="2">Belongs to the metallo-dependent hydrolases superfamily. TatD-type hydrolase family.</text>
</comment>
<sequence length="273" mass="30639">MLIDIAVNITDKLLAKDESSVEEVIRRCKDSKVLPIFTGLDHQTSKICINLAKKYKTVSTAGIHPTSSSRYSNIDEIVPLVNDETVVAIGECGLDYDRLEFADKVSQKRIFRSQLDLGGSCYFFHSRSCHRDFMEIVSDYRIRGVVHSFTGSIEEARELIKKGLFIGINGCSVKTLEGIEIVRSLPLESLLIETDSPYCKIRRSYAGFEYVTTDFSQQKALKKKNEPCCVVQMAEVVSNATGKDYDLVVETILDNTIGLYGDVLKKSVERWGL</sequence>
<gene>
    <name type="ordered locus">ECU03_0200</name>
</gene>
<reference key="1">
    <citation type="journal article" date="2001" name="Nature">
        <title>Genome sequence and gene compaction of the eukaryote parasite Encephalitozoon cuniculi.</title>
        <authorList>
            <person name="Katinka M.D."/>
            <person name="Duprat S."/>
            <person name="Cornillot E."/>
            <person name="Metenier G."/>
            <person name="Thomarat F."/>
            <person name="Prensier G."/>
            <person name="Barbe V."/>
            <person name="Peyretaillade E."/>
            <person name="Brottier P."/>
            <person name="Wincker P."/>
            <person name="Delbac F."/>
            <person name="El Alaoui H."/>
            <person name="Peyret P."/>
            <person name="Saurin W."/>
            <person name="Gouy M."/>
            <person name="Weissenbach J."/>
            <person name="Vivares C.P."/>
        </authorList>
    </citation>
    <scope>NUCLEOTIDE SEQUENCE [LARGE SCALE GENOMIC DNA]</scope>
    <source>
        <strain>GB-M1</strain>
    </source>
</reference>
<name>TATD1_ENCCU</name>
<protein>
    <recommendedName>
        <fullName>Putative deoxyribonuclease TATDN1 homolog</fullName>
        <ecNumber>3.1.21.-</ecNumber>
    </recommendedName>
</protein>
<dbReference type="EC" id="3.1.21.-"/>
<dbReference type="EMBL" id="AL590443">
    <property type="protein sequence ID" value="CAD26166.1"/>
    <property type="molecule type" value="Genomic_DNA"/>
</dbReference>
<dbReference type="RefSeq" id="NP_597531.1">
    <property type="nucleotide sequence ID" value="NM_001040895.1"/>
</dbReference>
<dbReference type="SMR" id="Q8SW70"/>
<dbReference type="FunCoup" id="Q8SW70">
    <property type="interactions" value="83"/>
</dbReference>
<dbReference type="STRING" id="284813.Q8SW70"/>
<dbReference type="GeneID" id="858693"/>
<dbReference type="KEGG" id="ecu:ECU03_0200"/>
<dbReference type="VEuPathDB" id="MicrosporidiaDB:ECU03_0200"/>
<dbReference type="HOGENOM" id="CLU_031506_1_1_1"/>
<dbReference type="InParanoid" id="Q8SW70"/>
<dbReference type="OMA" id="YGGSQKH"/>
<dbReference type="OrthoDB" id="6079689at2759"/>
<dbReference type="Proteomes" id="UP000000819">
    <property type="component" value="Chromosome III"/>
</dbReference>
<dbReference type="GO" id="GO:0005829">
    <property type="term" value="C:cytosol"/>
    <property type="evidence" value="ECO:0007669"/>
    <property type="project" value="TreeGrafter"/>
</dbReference>
<dbReference type="GO" id="GO:0005634">
    <property type="term" value="C:nucleus"/>
    <property type="evidence" value="ECO:0007669"/>
    <property type="project" value="UniProtKB-SubCell"/>
</dbReference>
<dbReference type="GO" id="GO:0008296">
    <property type="term" value="F:3'-5'-DNA exonuclease activity"/>
    <property type="evidence" value="ECO:0007669"/>
    <property type="project" value="TreeGrafter"/>
</dbReference>
<dbReference type="GO" id="GO:0046872">
    <property type="term" value="F:metal ion binding"/>
    <property type="evidence" value="ECO:0007669"/>
    <property type="project" value="UniProtKB-KW"/>
</dbReference>
<dbReference type="CDD" id="cd01310">
    <property type="entry name" value="TatD_DNAse"/>
    <property type="match status" value="1"/>
</dbReference>
<dbReference type="Gene3D" id="3.20.20.140">
    <property type="entry name" value="Metal-dependent hydrolases"/>
    <property type="match status" value="1"/>
</dbReference>
<dbReference type="InterPro" id="IPR032466">
    <property type="entry name" value="Metal_Hydrolase"/>
</dbReference>
<dbReference type="InterPro" id="IPR001130">
    <property type="entry name" value="TatD-like"/>
</dbReference>
<dbReference type="InterPro" id="IPR050891">
    <property type="entry name" value="TatD-type_Hydrolase"/>
</dbReference>
<dbReference type="PANTHER" id="PTHR10060:SF15">
    <property type="entry name" value="DEOXYRIBONUCLEASE TATDN1"/>
    <property type="match status" value="1"/>
</dbReference>
<dbReference type="PANTHER" id="PTHR10060">
    <property type="entry name" value="TATD FAMILY DEOXYRIBONUCLEASE"/>
    <property type="match status" value="1"/>
</dbReference>
<dbReference type="Pfam" id="PF01026">
    <property type="entry name" value="TatD_DNase"/>
    <property type="match status" value="1"/>
</dbReference>
<dbReference type="PIRSF" id="PIRSF005902">
    <property type="entry name" value="DNase_TatD"/>
    <property type="match status" value="1"/>
</dbReference>
<dbReference type="SUPFAM" id="SSF51556">
    <property type="entry name" value="Metallo-dependent hydrolases"/>
    <property type="match status" value="1"/>
</dbReference>
<evidence type="ECO:0000250" key="1"/>
<evidence type="ECO:0000305" key="2"/>
<feature type="chain" id="PRO_0000388425" description="Putative deoxyribonuclease TATDN1 homolog">
    <location>
        <begin position="1"/>
        <end position="273"/>
    </location>
</feature>
<feature type="binding site" evidence="1">
    <location>
        <position position="91"/>
    </location>
    <ligand>
        <name>a divalent metal cation</name>
        <dbReference type="ChEBI" id="CHEBI:60240"/>
        <label>1</label>
    </ligand>
</feature>
<feature type="binding site" evidence="1">
    <location>
        <position position="91"/>
    </location>
    <ligand>
        <name>a divalent metal cation</name>
        <dbReference type="ChEBI" id="CHEBI:60240"/>
        <label>2</label>
    </ligand>
</feature>
<feature type="binding site" evidence="1">
    <location>
        <position position="125"/>
    </location>
    <ligand>
        <name>a divalent metal cation</name>
        <dbReference type="ChEBI" id="CHEBI:60240"/>
        <label>2</label>
    </ligand>
</feature>
<feature type="binding site" evidence="1">
    <location>
        <position position="147"/>
    </location>
    <ligand>
        <name>a divalent metal cation</name>
        <dbReference type="ChEBI" id="CHEBI:60240"/>
        <label>2</label>
    </ligand>
</feature>
<feature type="binding site" evidence="1">
    <location>
        <position position="195"/>
    </location>
    <ligand>
        <name>a divalent metal cation</name>
        <dbReference type="ChEBI" id="CHEBI:60240"/>
        <label>1</label>
    </ligand>
</feature>
<proteinExistence type="inferred from homology"/>